<sequence length="143" mass="15943">MAGFLMKQMVGNQLSEVTGGLGMKDDGGEKTETGEDPEVIAARLEQEERRKEKHRKMENEREKMRQGIRDKYAIKKKEEGVAMDFTEGRIGGPRKTPEEIAAEMNAEDDSLIGQLGLTEQVEKAKTMATGAFETVKGFFPFGK</sequence>
<reference key="1">
    <citation type="journal article" date="1998" name="Science">
        <title>Genome sequence of the nematode C. elegans: a platform for investigating biology.</title>
        <authorList>
            <consortium name="The C. elegans sequencing consortium"/>
        </authorList>
    </citation>
    <scope>NUCLEOTIDE SEQUENCE [LARGE SCALE GENOMIC DNA]</scope>
    <source>
        <strain>Bristol N2</strain>
    </source>
</reference>
<proteinExistence type="inferred from homology"/>
<gene>
    <name type="primary">cpx-1</name>
    <name type="ORF">Y73E7A.4</name>
</gene>
<accession>Q9GUM7</accession>
<protein>
    <recommendedName>
        <fullName>Putative complexin-1</fullName>
    </recommendedName>
</protein>
<evidence type="ECO:0000250" key="1"/>
<evidence type="ECO:0000255" key="2"/>
<evidence type="ECO:0000256" key="3">
    <source>
        <dbReference type="SAM" id="MobiDB-lite"/>
    </source>
</evidence>
<evidence type="ECO:0000305" key="4"/>
<dbReference type="EMBL" id="FO081821">
    <property type="protein sequence ID" value="CCD73528.1"/>
    <property type="molecule type" value="Genomic_DNA"/>
</dbReference>
<dbReference type="RefSeq" id="NP_490868.1">
    <property type="nucleotide sequence ID" value="NM_058467.5"/>
</dbReference>
<dbReference type="SMR" id="Q9GUM7"/>
<dbReference type="BioGRID" id="55245">
    <property type="interactions" value="1"/>
</dbReference>
<dbReference type="FunCoup" id="Q9GUM7">
    <property type="interactions" value="470"/>
</dbReference>
<dbReference type="STRING" id="6239.Y73E7A.4.1"/>
<dbReference type="TCDB" id="1.F.1.1.3">
    <property type="family name" value="the synaptosomal vesicle fusion pore (svf-pore) family"/>
</dbReference>
<dbReference type="PaxDb" id="6239-Y73E7A.4"/>
<dbReference type="PeptideAtlas" id="Q9GUM7"/>
<dbReference type="EnsemblMetazoa" id="Y73E7A.4.1">
    <property type="protein sequence ID" value="Y73E7A.4.1"/>
    <property type="gene ID" value="WBGene00022271"/>
</dbReference>
<dbReference type="GeneID" id="190666"/>
<dbReference type="KEGG" id="cel:CELE_Y73E7A.4"/>
<dbReference type="UCSC" id="Y73E7A.4">
    <property type="organism name" value="c. elegans"/>
</dbReference>
<dbReference type="AGR" id="WB:WBGene00022271"/>
<dbReference type="CTD" id="190666"/>
<dbReference type="WormBase" id="Y73E7A.4">
    <property type="protein sequence ID" value="CE26415"/>
    <property type="gene ID" value="WBGene00022271"/>
    <property type="gene designation" value="cpx-1"/>
</dbReference>
<dbReference type="eggNOG" id="ENOG502S3I2">
    <property type="taxonomic scope" value="Eukaryota"/>
</dbReference>
<dbReference type="GeneTree" id="ENSGT00950000182938"/>
<dbReference type="HOGENOM" id="CLU_132159_0_0_1"/>
<dbReference type="InParanoid" id="Q9GUM7"/>
<dbReference type="OMA" id="IMKQMVG"/>
<dbReference type="OrthoDB" id="6229630at2759"/>
<dbReference type="PhylomeDB" id="Q9GUM7"/>
<dbReference type="Reactome" id="R-CEL-181429">
    <property type="pathway name" value="Serotonin Neurotransmitter Release Cycle"/>
</dbReference>
<dbReference type="Reactome" id="R-CEL-181430">
    <property type="pathway name" value="Norepinephrine Neurotransmitter Release Cycle"/>
</dbReference>
<dbReference type="Reactome" id="R-CEL-210500">
    <property type="pathway name" value="Glutamate Neurotransmitter Release Cycle"/>
</dbReference>
<dbReference type="Reactome" id="R-CEL-212676">
    <property type="pathway name" value="Dopamine Neurotransmitter Release Cycle"/>
</dbReference>
<dbReference type="Reactome" id="R-CEL-264642">
    <property type="pathway name" value="Acetylcholine Neurotransmitter Release Cycle"/>
</dbReference>
<dbReference type="Reactome" id="R-CEL-888590">
    <property type="pathway name" value="GABA synthesis, release, reuptake and degradation"/>
</dbReference>
<dbReference type="PRO" id="PR:Q9GUM7"/>
<dbReference type="Proteomes" id="UP000001940">
    <property type="component" value="Chromosome I"/>
</dbReference>
<dbReference type="Bgee" id="WBGene00022271">
    <property type="expression patterns" value="Expressed in larva and 3 other cell types or tissues"/>
</dbReference>
<dbReference type="GO" id="GO:0030424">
    <property type="term" value="C:axon"/>
    <property type="evidence" value="ECO:0000314"/>
    <property type="project" value="WormBase"/>
</dbReference>
<dbReference type="GO" id="GO:0005829">
    <property type="term" value="C:cytosol"/>
    <property type="evidence" value="ECO:0007669"/>
    <property type="project" value="UniProtKB-SubCell"/>
</dbReference>
<dbReference type="GO" id="GO:0031201">
    <property type="term" value="C:SNARE complex"/>
    <property type="evidence" value="ECO:0000318"/>
    <property type="project" value="GO_Central"/>
</dbReference>
<dbReference type="GO" id="GO:0045202">
    <property type="term" value="C:synapse"/>
    <property type="evidence" value="ECO:0000314"/>
    <property type="project" value="WormBase"/>
</dbReference>
<dbReference type="GO" id="GO:0043195">
    <property type="term" value="C:terminal bouton"/>
    <property type="evidence" value="ECO:0000318"/>
    <property type="project" value="GO_Central"/>
</dbReference>
<dbReference type="GO" id="GO:0000149">
    <property type="term" value="F:SNARE binding"/>
    <property type="evidence" value="ECO:0000318"/>
    <property type="project" value="GO_Central"/>
</dbReference>
<dbReference type="GO" id="GO:0019905">
    <property type="term" value="F:syntaxin binding"/>
    <property type="evidence" value="ECO:0007669"/>
    <property type="project" value="InterPro"/>
</dbReference>
<dbReference type="GO" id="GO:0050804">
    <property type="term" value="P:modulation of chemical synaptic transmission"/>
    <property type="evidence" value="ECO:0000318"/>
    <property type="project" value="GO_Central"/>
</dbReference>
<dbReference type="GO" id="GO:0031630">
    <property type="term" value="P:regulation of synaptic vesicle fusion to presynaptic active zone membrane"/>
    <property type="evidence" value="ECO:0000318"/>
    <property type="project" value="GO_Central"/>
</dbReference>
<dbReference type="GO" id="GO:0016079">
    <property type="term" value="P:synaptic vesicle exocytosis"/>
    <property type="evidence" value="ECO:0000318"/>
    <property type="project" value="GO_Central"/>
</dbReference>
<dbReference type="CDD" id="cd22808">
    <property type="entry name" value="Complexin_NTD_CPLX_I_II"/>
    <property type="match status" value="1"/>
</dbReference>
<dbReference type="FunFam" id="1.20.5.580:FF:000002">
    <property type="entry name" value="Complexin, isoform AB"/>
    <property type="match status" value="1"/>
</dbReference>
<dbReference type="Gene3D" id="1.20.5.580">
    <property type="entry name" value="Single Helix bin"/>
    <property type="match status" value="1"/>
</dbReference>
<dbReference type="InterPro" id="IPR008849">
    <property type="entry name" value="Synaphin"/>
</dbReference>
<dbReference type="PANTHER" id="PTHR16705">
    <property type="entry name" value="COMPLEXIN"/>
    <property type="match status" value="1"/>
</dbReference>
<dbReference type="PANTHER" id="PTHR16705:SF4">
    <property type="entry name" value="COMPLEXIN"/>
    <property type="match status" value="1"/>
</dbReference>
<dbReference type="Pfam" id="PF05835">
    <property type="entry name" value="Synaphin"/>
    <property type="match status" value="1"/>
</dbReference>
<dbReference type="SUPFAM" id="SSF58038">
    <property type="entry name" value="SNARE fusion complex"/>
    <property type="match status" value="1"/>
</dbReference>
<keyword id="KW-0175">Coiled coil</keyword>
<keyword id="KW-0963">Cytoplasm</keyword>
<keyword id="KW-0268">Exocytosis</keyword>
<keyword id="KW-0532">Neurotransmitter transport</keyword>
<keyword id="KW-1185">Reference proteome</keyword>
<keyword id="KW-0813">Transport</keyword>
<organism>
    <name type="scientific">Caenorhabditis elegans</name>
    <dbReference type="NCBI Taxonomy" id="6239"/>
    <lineage>
        <taxon>Eukaryota</taxon>
        <taxon>Metazoa</taxon>
        <taxon>Ecdysozoa</taxon>
        <taxon>Nematoda</taxon>
        <taxon>Chromadorea</taxon>
        <taxon>Rhabditida</taxon>
        <taxon>Rhabditina</taxon>
        <taxon>Rhabditomorpha</taxon>
        <taxon>Rhabditoidea</taxon>
        <taxon>Rhabditidae</taxon>
        <taxon>Peloderinae</taxon>
        <taxon>Caenorhabditis</taxon>
    </lineage>
</organism>
<name>CPLX1_CAEEL</name>
<comment type="function">
    <text evidence="1">Positively regulates a late step in synaptic vesicle exocytosis.</text>
</comment>
<comment type="subcellular location">
    <subcellularLocation>
        <location evidence="1">Cytoplasm</location>
        <location evidence="1">Cytosol</location>
    </subcellularLocation>
</comment>
<comment type="similarity">
    <text evidence="4">Belongs to the complexin/synaphin family.</text>
</comment>
<feature type="chain" id="PRO_0000240246" description="Putative complexin-1">
    <location>
        <begin position="1"/>
        <end position="143"/>
    </location>
</feature>
<feature type="region of interest" description="Disordered" evidence="3">
    <location>
        <begin position="16"/>
        <end position="72"/>
    </location>
</feature>
<feature type="coiled-coil region" evidence="2">
    <location>
        <begin position="40"/>
        <end position="71"/>
    </location>
</feature>
<feature type="compositionally biased region" description="Basic and acidic residues" evidence="3">
    <location>
        <begin position="23"/>
        <end position="33"/>
    </location>
</feature>
<feature type="compositionally biased region" description="Basic and acidic residues" evidence="3">
    <location>
        <begin position="44"/>
        <end position="72"/>
    </location>
</feature>